<reference key="1">
    <citation type="journal article" date="2004" name="Proc. Natl. Acad. Sci. U.S.A.">
        <title>Genome sequence of the enterobacterial phytopathogen Erwinia carotovora subsp. atroseptica and characterization of virulence factors.</title>
        <authorList>
            <person name="Bell K.S."/>
            <person name="Sebaihia M."/>
            <person name="Pritchard L."/>
            <person name="Holden M.T.G."/>
            <person name="Hyman L.J."/>
            <person name="Holeva M.C."/>
            <person name="Thomson N.R."/>
            <person name="Bentley S.D."/>
            <person name="Churcher L.J.C."/>
            <person name="Mungall K."/>
            <person name="Atkin R."/>
            <person name="Bason N."/>
            <person name="Brooks K."/>
            <person name="Chillingworth T."/>
            <person name="Clark K."/>
            <person name="Doggett J."/>
            <person name="Fraser A."/>
            <person name="Hance Z."/>
            <person name="Hauser H."/>
            <person name="Jagels K."/>
            <person name="Moule S."/>
            <person name="Norbertczak H."/>
            <person name="Ormond D."/>
            <person name="Price C."/>
            <person name="Quail M.A."/>
            <person name="Sanders M."/>
            <person name="Walker D."/>
            <person name="Whitehead S."/>
            <person name="Salmond G.P.C."/>
            <person name="Birch P.R.J."/>
            <person name="Parkhill J."/>
            <person name="Toth I.K."/>
        </authorList>
    </citation>
    <scope>NUCLEOTIDE SEQUENCE [LARGE SCALE GENOMIC DNA]</scope>
    <source>
        <strain>SCRI 1043 / ATCC BAA-672</strain>
    </source>
</reference>
<keyword id="KW-0028">Amino-acid biosynthesis</keyword>
<keyword id="KW-0055">Arginine biosynthesis</keyword>
<keyword id="KW-0963">Cytoplasm</keyword>
<keyword id="KW-1185">Reference proteome</keyword>
<keyword id="KW-0808">Transferase</keyword>
<feature type="chain" id="PRO_0000112925" description="Ornithine carbamoyltransferase">
    <location>
        <begin position="1"/>
        <end position="335"/>
    </location>
</feature>
<feature type="binding site" evidence="2">
    <location>
        <begin position="56"/>
        <end position="59"/>
    </location>
    <ligand>
        <name>carbamoyl phosphate</name>
        <dbReference type="ChEBI" id="CHEBI:58228"/>
    </ligand>
</feature>
<feature type="binding site" evidence="2">
    <location>
        <position position="83"/>
    </location>
    <ligand>
        <name>carbamoyl phosphate</name>
        <dbReference type="ChEBI" id="CHEBI:58228"/>
    </ligand>
</feature>
<feature type="binding site" evidence="2">
    <location>
        <position position="107"/>
    </location>
    <ligand>
        <name>carbamoyl phosphate</name>
        <dbReference type="ChEBI" id="CHEBI:58228"/>
    </ligand>
</feature>
<feature type="binding site" evidence="2">
    <location>
        <begin position="134"/>
        <end position="137"/>
    </location>
    <ligand>
        <name>carbamoyl phosphate</name>
        <dbReference type="ChEBI" id="CHEBI:58228"/>
    </ligand>
</feature>
<feature type="binding site" evidence="2">
    <location>
        <position position="168"/>
    </location>
    <ligand>
        <name>L-ornithine</name>
        <dbReference type="ChEBI" id="CHEBI:46911"/>
    </ligand>
</feature>
<feature type="binding site" evidence="2">
    <location>
        <position position="232"/>
    </location>
    <ligand>
        <name>L-ornithine</name>
        <dbReference type="ChEBI" id="CHEBI:46911"/>
    </ligand>
</feature>
<feature type="binding site" evidence="2">
    <location>
        <begin position="236"/>
        <end position="237"/>
    </location>
    <ligand>
        <name>L-ornithine</name>
        <dbReference type="ChEBI" id="CHEBI:46911"/>
    </ligand>
</feature>
<feature type="binding site" evidence="2">
    <location>
        <begin position="274"/>
        <end position="275"/>
    </location>
    <ligand>
        <name>carbamoyl phosphate</name>
        <dbReference type="ChEBI" id="CHEBI:58228"/>
    </ligand>
</feature>
<feature type="binding site" evidence="2">
    <location>
        <position position="320"/>
    </location>
    <ligand>
        <name>carbamoyl phosphate</name>
        <dbReference type="ChEBI" id="CHEBI:58228"/>
    </ligand>
</feature>
<gene>
    <name evidence="2" type="primary">argI</name>
    <name type="ordered locus">ECA0384</name>
</gene>
<protein>
    <recommendedName>
        <fullName evidence="2">Ornithine carbamoyltransferase</fullName>
        <shortName evidence="2">OTCase</shortName>
        <ecNumber evidence="2">2.1.3.3</ecNumber>
    </recommendedName>
</protein>
<proteinExistence type="inferred from homology"/>
<organism>
    <name type="scientific">Pectobacterium atrosepticum (strain SCRI 1043 / ATCC BAA-672)</name>
    <name type="common">Erwinia carotovora subsp. atroseptica</name>
    <dbReference type="NCBI Taxonomy" id="218491"/>
    <lineage>
        <taxon>Bacteria</taxon>
        <taxon>Pseudomonadati</taxon>
        <taxon>Pseudomonadota</taxon>
        <taxon>Gammaproteobacteria</taxon>
        <taxon>Enterobacterales</taxon>
        <taxon>Pectobacteriaceae</taxon>
        <taxon>Pectobacterium</taxon>
    </lineage>
</organism>
<dbReference type="EC" id="2.1.3.3" evidence="2"/>
<dbReference type="EMBL" id="BX950851">
    <property type="protein sequence ID" value="CAG73303.1"/>
    <property type="molecule type" value="Genomic_DNA"/>
</dbReference>
<dbReference type="RefSeq" id="WP_011092014.1">
    <property type="nucleotide sequence ID" value="NC_004547.2"/>
</dbReference>
<dbReference type="SMR" id="Q6DA71"/>
<dbReference type="STRING" id="218491.ECA0384"/>
<dbReference type="GeneID" id="57207253"/>
<dbReference type="KEGG" id="eca:ECA0384"/>
<dbReference type="PATRIC" id="fig|218491.5.peg.388"/>
<dbReference type="eggNOG" id="COG0078">
    <property type="taxonomic scope" value="Bacteria"/>
</dbReference>
<dbReference type="HOGENOM" id="CLU_043846_3_1_6"/>
<dbReference type="OrthoDB" id="9802587at2"/>
<dbReference type="UniPathway" id="UPA00068">
    <property type="reaction ID" value="UER00112"/>
</dbReference>
<dbReference type="Proteomes" id="UP000007966">
    <property type="component" value="Chromosome"/>
</dbReference>
<dbReference type="GO" id="GO:0005737">
    <property type="term" value="C:cytoplasm"/>
    <property type="evidence" value="ECO:0007669"/>
    <property type="project" value="UniProtKB-SubCell"/>
</dbReference>
<dbReference type="GO" id="GO:0016597">
    <property type="term" value="F:amino acid binding"/>
    <property type="evidence" value="ECO:0007669"/>
    <property type="project" value="InterPro"/>
</dbReference>
<dbReference type="GO" id="GO:0004585">
    <property type="term" value="F:ornithine carbamoyltransferase activity"/>
    <property type="evidence" value="ECO:0007669"/>
    <property type="project" value="UniProtKB-UniRule"/>
</dbReference>
<dbReference type="GO" id="GO:0042450">
    <property type="term" value="P:arginine biosynthetic process via ornithine"/>
    <property type="evidence" value="ECO:0007669"/>
    <property type="project" value="TreeGrafter"/>
</dbReference>
<dbReference type="GO" id="GO:0019240">
    <property type="term" value="P:citrulline biosynthetic process"/>
    <property type="evidence" value="ECO:0007669"/>
    <property type="project" value="TreeGrafter"/>
</dbReference>
<dbReference type="GO" id="GO:0006526">
    <property type="term" value="P:L-arginine biosynthetic process"/>
    <property type="evidence" value="ECO:0007669"/>
    <property type="project" value="UniProtKB-UniRule"/>
</dbReference>
<dbReference type="FunFam" id="3.40.50.1370:FF:000004">
    <property type="entry name" value="Ornithine carbamoyltransferase"/>
    <property type="match status" value="1"/>
</dbReference>
<dbReference type="Gene3D" id="3.40.50.1370">
    <property type="entry name" value="Aspartate/ornithine carbamoyltransferase"/>
    <property type="match status" value="2"/>
</dbReference>
<dbReference type="HAMAP" id="MF_01109">
    <property type="entry name" value="OTCase"/>
    <property type="match status" value="1"/>
</dbReference>
<dbReference type="InterPro" id="IPR006132">
    <property type="entry name" value="Asp/Orn_carbamoyltranf_P-bd"/>
</dbReference>
<dbReference type="InterPro" id="IPR006130">
    <property type="entry name" value="Asp/Orn_carbamoylTrfase"/>
</dbReference>
<dbReference type="InterPro" id="IPR036901">
    <property type="entry name" value="Asp/Orn_carbamoylTrfase_sf"/>
</dbReference>
<dbReference type="InterPro" id="IPR006131">
    <property type="entry name" value="Asp_carbamoyltransf_Asp/Orn-bd"/>
</dbReference>
<dbReference type="InterPro" id="IPR002292">
    <property type="entry name" value="Orn/put_carbamltrans"/>
</dbReference>
<dbReference type="InterPro" id="IPR024904">
    <property type="entry name" value="OTCase_ArgI"/>
</dbReference>
<dbReference type="NCBIfam" id="TIGR00658">
    <property type="entry name" value="orni_carb_tr"/>
    <property type="match status" value="1"/>
</dbReference>
<dbReference type="NCBIfam" id="NF003286">
    <property type="entry name" value="PRK04284.1"/>
    <property type="match status" value="1"/>
</dbReference>
<dbReference type="NCBIfam" id="NF009213">
    <property type="entry name" value="PRK12562.1"/>
    <property type="match status" value="1"/>
</dbReference>
<dbReference type="PANTHER" id="PTHR45753:SF4">
    <property type="entry name" value="ORNITHINE CARBAMOYLTRANSFERASE SUBUNIT F-RELATED"/>
    <property type="match status" value="1"/>
</dbReference>
<dbReference type="PANTHER" id="PTHR45753">
    <property type="entry name" value="ORNITHINE CARBAMOYLTRANSFERASE, MITOCHONDRIAL"/>
    <property type="match status" value="1"/>
</dbReference>
<dbReference type="Pfam" id="PF00185">
    <property type="entry name" value="OTCace"/>
    <property type="match status" value="1"/>
</dbReference>
<dbReference type="Pfam" id="PF02729">
    <property type="entry name" value="OTCace_N"/>
    <property type="match status" value="1"/>
</dbReference>
<dbReference type="PRINTS" id="PR00100">
    <property type="entry name" value="AOTCASE"/>
</dbReference>
<dbReference type="PRINTS" id="PR00102">
    <property type="entry name" value="OTCASE"/>
</dbReference>
<dbReference type="SUPFAM" id="SSF53671">
    <property type="entry name" value="Aspartate/ornithine carbamoyltransferase"/>
    <property type="match status" value="1"/>
</dbReference>
<dbReference type="PROSITE" id="PS00097">
    <property type="entry name" value="CARBAMOYLTRANSFERASE"/>
    <property type="match status" value="1"/>
</dbReference>
<name>OTC_PECAS</name>
<sequence length="335" mass="36900">MQPFYKRHFLRLMDFTPAEIAHLLALSTKLKADKKNGIETRRLQGKNIALIFEKDSTRTRCSFEVAAYDQGAQVTYLGPSGSQIGHKESIKDTARVLGRMYDGIQYRGYGQQIVETLAQYAGVPVWNGLTNEFHPTQLLADLLTMQEYLPGKALSDMTLVYVGDARNNMGNTMLEAAALTGLDLRLVAPKACWPDAGLVAECQAAAKQTGGSITLTEDIAAGVAGADFIYTDVWVSMGEPKETWKERIALLKPYQVNMAMIAATGNPQVKFLHCLPAFHDDQTTMGQQMAEQYGLHGGMEVTDEVFESAHSIVFDQAENRMHTIKAVMVATLAQD</sequence>
<comment type="function">
    <text evidence="1">Reversibly catalyzes the transfer of the carbamoyl group from carbamoyl phosphate (CP) to the N(epsilon) atom of ornithine (ORN) to produce L-citrulline.</text>
</comment>
<comment type="catalytic activity">
    <reaction evidence="2">
        <text>carbamoyl phosphate + L-ornithine = L-citrulline + phosphate + H(+)</text>
        <dbReference type="Rhea" id="RHEA:19513"/>
        <dbReference type="ChEBI" id="CHEBI:15378"/>
        <dbReference type="ChEBI" id="CHEBI:43474"/>
        <dbReference type="ChEBI" id="CHEBI:46911"/>
        <dbReference type="ChEBI" id="CHEBI:57743"/>
        <dbReference type="ChEBI" id="CHEBI:58228"/>
        <dbReference type="EC" id="2.1.3.3"/>
    </reaction>
</comment>
<comment type="pathway">
    <text evidence="2">Amino-acid biosynthesis; L-arginine biosynthesis; L-arginine from L-ornithine and carbamoyl phosphate: step 1/3.</text>
</comment>
<comment type="subcellular location">
    <subcellularLocation>
        <location evidence="2">Cytoplasm</location>
    </subcellularLocation>
</comment>
<comment type="similarity">
    <text evidence="2">Belongs to the aspartate/ornithine carbamoyltransferase superfamily. OTCase family.</text>
</comment>
<accession>Q6DA71</accession>
<evidence type="ECO:0000250" key="1"/>
<evidence type="ECO:0000255" key="2">
    <source>
        <dbReference type="HAMAP-Rule" id="MF_01109"/>
    </source>
</evidence>